<evidence type="ECO:0000255" key="1">
    <source>
        <dbReference type="HAMAP-Rule" id="MF_04066"/>
    </source>
</evidence>
<evidence type="ECO:0000256" key="2">
    <source>
        <dbReference type="SAM" id="MobiDB-lite"/>
    </source>
</evidence>
<name>NS1_I78AC</name>
<protein>
    <recommendedName>
        <fullName evidence="1">Non-structural protein 1</fullName>
        <shortName evidence="1">NS1</shortName>
    </recommendedName>
    <alternativeName>
        <fullName evidence="1">NS1A</fullName>
    </alternativeName>
</protein>
<proteinExistence type="inferred from homology"/>
<keyword id="KW-0025">Alternative splicing</keyword>
<keyword id="KW-1262">Eukaryotic host gene expression shutoff by virus</keyword>
<keyword id="KW-1035">Host cytoplasm</keyword>
<keyword id="KW-1190">Host gene expression shutoff by virus</keyword>
<keyword id="KW-1192">Host mRNA suppression by virus</keyword>
<keyword id="KW-1048">Host nucleus</keyword>
<keyword id="KW-0945">Host-virus interaction</keyword>
<keyword id="KW-1090">Inhibition of host innate immune response by virus</keyword>
<keyword id="KW-1114">Inhibition of host interferon signaling pathway by virus</keyword>
<keyword id="KW-1102">Inhibition of host PKR by virus</keyword>
<keyword id="KW-1103">Inhibition of host pre-mRNA processing by virus</keyword>
<keyword id="KW-1088">Inhibition of host RIG-I by virus</keyword>
<keyword id="KW-1113">Inhibition of host RLR pathway by virus</keyword>
<keyword id="KW-0922">Interferon antiviral system evasion</keyword>
<keyword id="KW-0694">RNA-binding</keyword>
<keyword id="KW-0832">Ubl conjugation</keyword>
<keyword id="KW-0899">Viral immunoevasion</keyword>
<gene>
    <name evidence="1" type="primary">NS</name>
</gene>
<reference key="1">
    <citation type="journal article" date="2006" name="Science">
        <title>Large-scale sequence analysis of avian influenza isolates.</title>
        <authorList>
            <person name="Obenauer J.C."/>
            <person name="Denson J."/>
            <person name="Mehta P.K."/>
            <person name="Su X."/>
            <person name="Mukatira S."/>
            <person name="Finkelstein D.B."/>
            <person name="Xu X."/>
            <person name="Wang J."/>
            <person name="Ma J."/>
            <person name="Fan Y."/>
            <person name="Rakestraw K.M."/>
            <person name="Webster R.G."/>
            <person name="Hoffmann E."/>
            <person name="Krauss S."/>
            <person name="Zheng J."/>
            <person name="Zhang Z."/>
            <person name="Naeve C.W."/>
        </authorList>
    </citation>
    <scope>NUCLEOTIDE SEQUENCE [GENOMIC RNA]</scope>
</reference>
<feature type="chain" id="PRO_0000324263" description="Non-structural protein 1">
    <location>
        <begin position="1"/>
        <end position="230"/>
    </location>
</feature>
<feature type="region of interest" description="RNA-binding and homodimerization" evidence="1">
    <location>
        <begin position="1"/>
        <end position="73"/>
    </location>
</feature>
<feature type="region of interest" description="CPSF4-binding" evidence="1">
    <location>
        <begin position="180"/>
        <end position="215"/>
    </location>
</feature>
<feature type="region of interest" description="Disordered" evidence="2">
    <location>
        <begin position="205"/>
        <end position="230"/>
    </location>
</feature>
<feature type="region of interest" description="PABPN1-binding" evidence="1">
    <location>
        <begin position="223"/>
        <end position="230"/>
    </location>
</feature>
<feature type="short sequence motif" description="Nuclear localization signal" evidence="1">
    <location>
        <begin position="34"/>
        <end position="38"/>
    </location>
</feature>
<feature type="short sequence motif" description="Nuclear export signal" evidence="1">
    <location>
        <begin position="137"/>
        <end position="146"/>
    </location>
</feature>
<comment type="function">
    <text evidence="1">Inhibits post-transcriptional processing of cellular pre-mRNA, by binding and inhibiting two cellular proteins that are required for the 3'-end processing of cellular pre-mRNAs: the 30 kDa cleavage and polyadenylation specificity factor/CPSF4 and the poly(A)-binding protein 2/PABPN1. In turn, unprocessed 3' end pre-mRNAs accumulate in the host nucleus and are no longer exported to the cytoplasm. Cellular protein synthesis is thereby shut off very early after virus infection. Viral protein synthesis is not affected by the inhibition of the cellular 3' end processing machinery because the poly(A) tails of viral mRNAs are produced by the viral polymerase through a stuttering mechanism. Prevents the establishment of the cellular antiviral state by inhibiting TRIM25-mediated RIGI ubiquitination, which normally triggers the antiviral transduction signal that leads to the activation of type I IFN genes by transcription factors IRF3 and IRF7. Also binds poly(A) and U6 snRNA. Inhibits the integrated stress response (ISR) in the infected cell by blocking dsRNA binding by EIF2AK2/PKR and further phosphorylation of EIF2S1/EIF-2ALPHA. Stress granule formation is thus inhibited, which allows protein synthesis and viral replication.</text>
</comment>
<comment type="subunit">
    <text evidence="1">Homodimer. Interacts with host TRIM25 (via coiled coil); this interaction specifically inhibits TRIM25 multimerization and TRIM25-mediated RIGI CARD ubiquitination. Interacts with human EIF2AK2/PKR, CPSF4, IVNS1ABP and PABPN1.</text>
</comment>
<comment type="subcellular location">
    <subcellularLocation>
        <location evidence="1">Host nucleus</location>
    </subcellularLocation>
    <subcellularLocation>
        <location evidence="1">Host cytoplasm</location>
    </subcellularLocation>
    <text evidence="1">In uninfected, transfected cells, NS1 is localized in the nucleus. Only in virus infected cells, the nuclear export signal is unveiled, presumably by a viral protein, and a fraction of NS1 is exported in the cytoplasm.</text>
</comment>
<comment type="alternative products">
    <event type="alternative splicing"/>
    <isoform>
        <id>Q0A3Q3-1</id>
        <name>NS1</name>
        <sequence type="displayed"/>
    </isoform>
    <isoform>
        <id>Q0A3Q4-1</id>
        <name>NEP</name>
        <name>NS2</name>
        <sequence type="external"/>
    </isoform>
</comment>
<comment type="domain">
    <text evidence="1">The dsRNA-binding region is required for suppression of RNA silencing.</text>
</comment>
<comment type="PTM">
    <text evidence="1">Upon interferon induction, ISGylated via host HERC5; this results in the impairment of NS1 interaction with RNA targets due to its inability to form homodimers and to interact with host EIF2AK2/PKR.</text>
</comment>
<comment type="similarity">
    <text evidence="1">Belongs to the influenza A viruses NS1 family.</text>
</comment>
<accession>Q0A3Q3</accession>
<dbReference type="EMBL" id="CY014775">
    <property type="protein sequence ID" value="ABI84678.1"/>
    <property type="molecule type" value="Genomic_RNA"/>
</dbReference>
<dbReference type="SMR" id="Q0A3Q3"/>
<dbReference type="GO" id="GO:0030430">
    <property type="term" value="C:host cell cytoplasm"/>
    <property type="evidence" value="ECO:0007669"/>
    <property type="project" value="UniProtKB-SubCell"/>
</dbReference>
<dbReference type="GO" id="GO:0042025">
    <property type="term" value="C:host cell nucleus"/>
    <property type="evidence" value="ECO:0007669"/>
    <property type="project" value="UniProtKB-SubCell"/>
</dbReference>
<dbReference type="GO" id="GO:0030291">
    <property type="term" value="F:protein serine/threonine kinase inhibitor activity"/>
    <property type="evidence" value="ECO:0007669"/>
    <property type="project" value="UniProtKB-KW"/>
</dbReference>
<dbReference type="GO" id="GO:0003723">
    <property type="term" value="F:RNA binding"/>
    <property type="evidence" value="ECO:0007669"/>
    <property type="project" value="UniProtKB-KW"/>
</dbReference>
<dbReference type="GO" id="GO:0039540">
    <property type="term" value="P:symbiont-mediated suppression of host cytoplasmic pattern recognition receptor signaling pathway via inhibition of RIG-I activity"/>
    <property type="evidence" value="ECO:0007669"/>
    <property type="project" value="UniProtKB-KW"/>
</dbReference>
<dbReference type="GO" id="GO:0039657">
    <property type="term" value="P:symbiont-mediated suppression of host gene expression"/>
    <property type="evidence" value="ECO:0007669"/>
    <property type="project" value="UniProtKB-KW"/>
</dbReference>
<dbReference type="GO" id="GO:0039524">
    <property type="term" value="P:symbiont-mediated suppression of host mRNA processing"/>
    <property type="evidence" value="ECO:0007669"/>
    <property type="project" value="UniProtKB-KW"/>
</dbReference>
<dbReference type="GO" id="GO:0039580">
    <property type="term" value="P:symbiont-mediated suppression of host PKR/eIFalpha signaling"/>
    <property type="evidence" value="ECO:0007669"/>
    <property type="project" value="UniProtKB-KW"/>
</dbReference>
<dbReference type="GO" id="GO:0039502">
    <property type="term" value="P:symbiont-mediated suppression of host type I interferon-mediated signaling pathway"/>
    <property type="evidence" value="ECO:0007669"/>
    <property type="project" value="UniProtKB-KW"/>
</dbReference>
<dbReference type="FunFam" id="1.10.287.10:FF:000001">
    <property type="entry name" value="Non-structural protein 1"/>
    <property type="match status" value="1"/>
</dbReference>
<dbReference type="FunFam" id="3.30.420.330:FF:000001">
    <property type="entry name" value="Non-structural protein 1"/>
    <property type="match status" value="1"/>
</dbReference>
<dbReference type="Gene3D" id="3.30.420.330">
    <property type="entry name" value="Influenza virus non-structural protein, effector domain"/>
    <property type="match status" value="1"/>
</dbReference>
<dbReference type="Gene3D" id="1.10.287.10">
    <property type="entry name" value="S15/NS1, RNA-binding"/>
    <property type="match status" value="1"/>
</dbReference>
<dbReference type="HAMAP" id="MF_04066">
    <property type="entry name" value="INFV_NS1"/>
    <property type="match status" value="1"/>
</dbReference>
<dbReference type="InterPro" id="IPR004208">
    <property type="entry name" value="NS1"/>
</dbReference>
<dbReference type="InterPro" id="IPR000256">
    <property type="entry name" value="NS1A"/>
</dbReference>
<dbReference type="InterPro" id="IPR038064">
    <property type="entry name" value="NS1A_effect_dom-like_sf"/>
</dbReference>
<dbReference type="InterPro" id="IPR009068">
    <property type="entry name" value="uS15_NS1_RNA-bd_sf"/>
</dbReference>
<dbReference type="Pfam" id="PF00600">
    <property type="entry name" value="Flu_NS1"/>
    <property type="match status" value="1"/>
</dbReference>
<dbReference type="SUPFAM" id="SSF143021">
    <property type="entry name" value="Ns1 effector domain-like"/>
    <property type="match status" value="1"/>
</dbReference>
<dbReference type="SUPFAM" id="SSF47060">
    <property type="entry name" value="S15/NS1 RNA-binding domain"/>
    <property type="match status" value="1"/>
</dbReference>
<sequence length="230" mass="26117">MDSNTVSSFQVDCFLWHVRKRFADQELGDAPFLDRLRRDQKSLRGRGSTLGLDIETATRAGKQIVERILEEESDEALKMTIASVPASRYLTDMTFEEMSRDWFMLMPKQKVAGSLCIRMDQAIMDKNIILKANFSVIFDRLETLILLRAFTEEGAIVGEISPLPSLPGHTDEDVKNAIGVLIGGLEWNDNTVRVSETLQRFAWRSSNEDGRPPLPPKQKRKMARTIESEV</sequence>
<organism>
    <name type="scientific">Influenza A virus (strain A/Turkey/Minnesota/501/1978 H6N8)</name>
    <dbReference type="NCBI Taxonomy" id="387259"/>
    <lineage>
        <taxon>Viruses</taxon>
        <taxon>Riboviria</taxon>
        <taxon>Orthornavirae</taxon>
        <taxon>Negarnaviricota</taxon>
        <taxon>Polyploviricotina</taxon>
        <taxon>Insthoviricetes</taxon>
        <taxon>Articulavirales</taxon>
        <taxon>Orthomyxoviridae</taxon>
        <taxon>Alphainfluenzavirus</taxon>
        <taxon>Alphainfluenzavirus influenzae</taxon>
        <taxon>Influenza A virus</taxon>
    </lineage>
</organism>
<organismHost>
    <name type="scientific">Aves</name>
    <dbReference type="NCBI Taxonomy" id="8782"/>
</organismHost>